<organism>
    <name type="scientific">Kluyveromyces lactis (strain ATCC 8585 / CBS 2359 / DSM 70799 / NBRC 1267 / NRRL Y-1140 / WM37)</name>
    <name type="common">Yeast</name>
    <name type="synonym">Candida sphaerica</name>
    <dbReference type="NCBI Taxonomy" id="284590"/>
    <lineage>
        <taxon>Eukaryota</taxon>
        <taxon>Fungi</taxon>
        <taxon>Dikarya</taxon>
        <taxon>Ascomycota</taxon>
        <taxon>Saccharomycotina</taxon>
        <taxon>Saccharomycetes</taxon>
        <taxon>Saccharomycetales</taxon>
        <taxon>Saccharomycetaceae</taxon>
        <taxon>Kluyveromyces</taxon>
    </lineage>
</organism>
<accession>Q6CSW8</accession>
<evidence type="ECO:0000250" key="1"/>
<evidence type="ECO:0000255" key="2">
    <source>
        <dbReference type="PROSITE-ProRule" id="PRU00388"/>
    </source>
</evidence>
<evidence type="ECO:0000255" key="3">
    <source>
        <dbReference type="PROSITE-ProRule" id="PRU10133"/>
    </source>
</evidence>
<protein>
    <recommendedName>
        <fullName>NEDD8-conjugating enzyme UBC12</fullName>
        <ecNumber>2.3.2.34</ecNumber>
    </recommendedName>
    <alternativeName>
        <fullName>RUB1-conjugating enzyme</fullName>
    </alternativeName>
    <alternativeName>
        <fullName>Ubiquitin carrier protein 12</fullName>
    </alternativeName>
</protein>
<dbReference type="EC" id="2.3.2.34"/>
<dbReference type="EMBL" id="CR382123">
    <property type="protein sequence ID" value="CAH01822.1"/>
    <property type="molecule type" value="Genomic_DNA"/>
</dbReference>
<dbReference type="RefSeq" id="XP_452971.1">
    <property type="nucleotide sequence ID" value="XM_452971.1"/>
</dbReference>
<dbReference type="SMR" id="Q6CSW8"/>
<dbReference type="FunCoup" id="Q6CSW8">
    <property type="interactions" value="850"/>
</dbReference>
<dbReference type="STRING" id="284590.Q6CSW8"/>
<dbReference type="PaxDb" id="284590-Q6CSW8"/>
<dbReference type="KEGG" id="kla:KLLA0_C17248g"/>
<dbReference type="eggNOG" id="KOG0420">
    <property type="taxonomic scope" value="Eukaryota"/>
</dbReference>
<dbReference type="HOGENOM" id="CLU_030988_6_0_1"/>
<dbReference type="InParanoid" id="Q6CSW8"/>
<dbReference type="OMA" id="YDNIVSP"/>
<dbReference type="UniPathway" id="UPA00885"/>
<dbReference type="Proteomes" id="UP000000598">
    <property type="component" value="Chromosome C"/>
</dbReference>
<dbReference type="GO" id="GO:0005524">
    <property type="term" value="F:ATP binding"/>
    <property type="evidence" value="ECO:0007669"/>
    <property type="project" value="UniProtKB-KW"/>
</dbReference>
<dbReference type="GO" id="GO:0061654">
    <property type="term" value="F:NEDD8 conjugating enzyme activity"/>
    <property type="evidence" value="ECO:0007669"/>
    <property type="project" value="UniProtKB-EC"/>
</dbReference>
<dbReference type="GO" id="GO:0045116">
    <property type="term" value="P:protein neddylation"/>
    <property type="evidence" value="ECO:0007669"/>
    <property type="project" value="UniProtKB-UniPathway"/>
</dbReference>
<dbReference type="CDD" id="cd23794">
    <property type="entry name" value="UBCc_UBE2F_UBE2M"/>
    <property type="match status" value="1"/>
</dbReference>
<dbReference type="FunFam" id="3.10.110.10:FF:000005">
    <property type="entry name" value="NEDD8-conjugating enzyme Ubc12"/>
    <property type="match status" value="1"/>
</dbReference>
<dbReference type="Gene3D" id="3.10.110.10">
    <property type="entry name" value="Ubiquitin Conjugating Enzyme"/>
    <property type="match status" value="1"/>
</dbReference>
<dbReference type="InterPro" id="IPR050113">
    <property type="entry name" value="Ub_conjugating_enzyme"/>
</dbReference>
<dbReference type="InterPro" id="IPR000608">
    <property type="entry name" value="UBQ-conjugat_E2_core"/>
</dbReference>
<dbReference type="InterPro" id="IPR023313">
    <property type="entry name" value="UBQ-conjugating_AS"/>
</dbReference>
<dbReference type="InterPro" id="IPR016135">
    <property type="entry name" value="UBQ-conjugating_enzyme/RWD"/>
</dbReference>
<dbReference type="PANTHER" id="PTHR24067">
    <property type="entry name" value="UBIQUITIN-CONJUGATING ENZYME E2"/>
    <property type="match status" value="1"/>
</dbReference>
<dbReference type="Pfam" id="PF00179">
    <property type="entry name" value="UQ_con"/>
    <property type="match status" value="1"/>
</dbReference>
<dbReference type="SMART" id="SM00212">
    <property type="entry name" value="UBCc"/>
    <property type="match status" value="1"/>
</dbReference>
<dbReference type="SUPFAM" id="SSF54495">
    <property type="entry name" value="UBC-like"/>
    <property type="match status" value="1"/>
</dbReference>
<dbReference type="PROSITE" id="PS00183">
    <property type="entry name" value="UBC_1"/>
    <property type="match status" value="1"/>
</dbReference>
<dbReference type="PROSITE" id="PS50127">
    <property type="entry name" value="UBC_2"/>
    <property type="match status" value="1"/>
</dbReference>
<gene>
    <name type="primary">UBC12</name>
    <name type="ordered locus">KLLA0C17248g</name>
</gene>
<reference key="1">
    <citation type="journal article" date="2004" name="Nature">
        <title>Genome evolution in yeasts.</title>
        <authorList>
            <person name="Dujon B."/>
            <person name="Sherman D."/>
            <person name="Fischer G."/>
            <person name="Durrens P."/>
            <person name="Casaregola S."/>
            <person name="Lafontaine I."/>
            <person name="de Montigny J."/>
            <person name="Marck C."/>
            <person name="Neuveglise C."/>
            <person name="Talla E."/>
            <person name="Goffard N."/>
            <person name="Frangeul L."/>
            <person name="Aigle M."/>
            <person name="Anthouard V."/>
            <person name="Babour A."/>
            <person name="Barbe V."/>
            <person name="Barnay S."/>
            <person name="Blanchin S."/>
            <person name="Beckerich J.-M."/>
            <person name="Beyne E."/>
            <person name="Bleykasten C."/>
            <person name="Boisrame A."/>
            <person name="Boyer J."/>
            <person name="Cattolico L."/>
            <person name="Confanioleri F."/>
            <person name="de Daruvar A."/>
            <person name="Despons L."/>
            <person name="Fabre E."/>
            <person name="Fairhead C."/>
            <person name="Ferry-Dumazet H."/>
            <person name="Groppi A."/>
            <person name="Hantraye F."/>
            <person name="Hennequin C."/>
            <person name="Jauniaux N."/>
            <person name="Joyet P."/>
            <person name="Kachouri R."/>
            <person name="Kerrest A."/>
            <person name="Koszul R."/>
            <person name="Lemaire M."/>
            <person name="Lesur I."/>
            <person name="Ma L."/>
            <person name="Muller H."/>
            <person name="Nicaud J.-M."/>
            <person name="Nikolski M."/>
            <person name="Oztas S."/>
            <person name="Ozier-Kalogeropoulos O."/>
            <person name="Pellenz S."/>
            <person name="Potier S."/>
            <person name="Richard G.-F."/>
            <person name="Straub M.-L."/>
            <person name="Suleau A."/>
            <person name="Swennen D."/>
            <person name="Tekaia F."/>
            <person name="Wesolowski-Louvel M."/>
            <person name="Westhof E."/>
            <person name="Wirth B."/>
            <person name="Zeniou-Meyer M."/>
            <person name="Zivanovic Y."/>
            <person name="Bolotin-Fukuhara M."/>
            <person name="Thierry A."/>
            <person name="Bouchier C."/>
            <person name="Caudron B."/>
            <person name="Scarpelli C."/>
            <person name="Gaillardin C."/>
            <person name="Weissenbach J."/>
            <person name="Wincker P."/>
            <person name="Souciet J.-L."/>
        </authorList>
    </citation>
    <scope>NUCLEOTIDE SEQUENCE [LARGE SCALE GENOMIC DNA]</scope>
    <source>
        <strain>ATCC 8585 / CBS 2359 / DSM 70799 / NBRC 1267 / NRRL Y-1140 / WM37</strain>
    </source>
</reference>
<sequence length="184" mass="21166">MLKLRALAEAKAKAKEGQGQETTPQVIKPSLIRLKKDLENIDLSEQICEYTTYLDENPMRVNLAIKPDIGYYAGGTYYFNVFIKDTYPMEPPVVKCMHRIYHPNIDIDGNVCLNLLREDWTPALDIQSIIIGILFLFHEPNGRDPLNKDAAKTLIEDPLRFENKVNHSLRGNNIDGVWYDKIIY</sequence>
<feature type="chain" id="PRO_0000082498" description="NEDD8-conjugating enzyme UBC12">
    <location>
        <begin position="1"/>
        <end position="184"/>
    </location>
</feature>
<feature type="domain" description="UBC core" evidence="2">
    <location>
        <begin position="29"/>
        <end position="174"/>
    </location>
</feature>
<feature type="active site" description="Glycyl thioester intermediate" evidence="2 3">
    <location>
        <position position="112"/>
    </location>
</feature>
<name>UBC12_KLULA</name>
<comment type="function">
    <text evidence="1">Accepts the ubiquitin-like protein NEDD8/RUB1 from the UBA3-ULA1 E1 complex and catalyzes its covalent attachment to other proteins.</text>
</comment>
<comment type="catalytic activity">
    <reaction>
        <text>[E1 NEDD8-activating enzyme]-S-[NEDD8 protein]-yl-L-cysteine + [E2 NEDD8-conjugating enzyme]-L-cysteine = [E1 NEDD8-activating enzyme]-L-cysteine + [E2 NEDD8-conjugating enzyme]-S-[NEDD8-protein]-yl-L-cysteine.</text>
        <dbReference type="EC" id="2.3.2.34"/>
    </reaction>
</comment>
<comment type="pathway">
    <text>Protein modification; protein neddylation.</text>
</comment>
<comment type="similarity">
    <text evidence="2">Belongs to the ubiquitin-conjugating enzyme family. UBC12 subfamily.</text>
</comment>
<proteinExistence type="inferred from homology"/>
<keyword id="KW-0067">ATP-binding</keyword>
<keyword id="KW-0547">Nucleotide-binding</keyword>
<keyword id="KW-1185">Reference proteome</keyword>
<keyword id="KW-0808">Transferase</keyword>
<keyword id="KW-0833">Ubl conjugation pathway</keyword>